<name>UPP_CLOP1</name>
<proteinExistence type="inferred from homology"/>
<accession>Q0TNB4</accession>
<gene>
    <name evidence="1" type="primary">upp</name>
    <name type="ordered locus">CPF_2462</name>
</gene>
<organism>
    <name type="scientific">Clostridium perfringens (strain ATCC 13124 / DSM 756 / JCM 1290 / NCIMB 6125 / NCTC 8237 / Type A)</name>
    <dbReference type="NCBI Taxonomy" id="195103"/>
    <lineage>
        <taxon>Bacteria</taxon>
        <taxon>Bacillati</taxon>
        <taxon>Bacillota</taxon>
        <taxon>Clostridia</taxon>
        <taxon>Eubacteriales</taxon>
        <taxon>Clostridiaceae</taxon>
        <taxon>Clostridium</taxon>
    </lineage>
</organism>
<protein>
    <recommendedName>
        <fullName evidence="1">Uracil phosphoribosyltransferase</fullName>
        <ecNumber evidence="1">2.4.2.9</ecNumber>
    </recommendedName>
    <alternativeName>
        <fullName evidence="1">UMP pyrophosphorylase</fullName>
    </alternativeName>
    <alternativeName>
        <fullName evidence="1">UPRTase</fullName>
    </alternativeName>
</protein>
<evidence type="ECO:0000255" key="1">
    <source>
        <dbReference type="HAMAP-Rule" id="MF_01218"/>
    </source>
</evidence>
<keyword id="KW-0021">Allosteric enzyme</keyword>
<keyword id="KW-0328">Glycosyltransferase</keyword>
<keyword id="KW-0342">GTP-binding</keyword>
<keyword id="KW-0460">Magnesium</keyword>
<keyword id="KW-0547">Nucleotide-binding</keyword>
<keyword id="KW-0808">Transferase</keyword>
<sequence>MSKVTEITHPLILHKLAFIRDKNTGSKDFRELVSEVSMLMAYEVTRNLPMEEIEIETPVCKTKCKVLAGKKVAIVPILRAGLGMVDGMLQLIPAAKVGHIGLYRDEETLQPVEYFCKLPQDIAERDVIVVDPMLATGGSAADAITLLKKRGAKQIRLMCLISSPEGIEFVQKAHPDVDIYVACIDEKLNDHGYIVPGLGDAGDRLFGTK</sequence>
<feature type="chain" id="PRO_1000053707" description="Uracil phosphoribosyltransferase">
    <location>
        <begin position="1"/>
        <end position="209"/>
    </location>
</feature>
<feature type="binding site" evidence="1">
    <location>
        <position position="79"/>
    </location>
    <ligand>
        <name>5-phospho-alpha-D-ribose 1-diphosphate</name>
        <dbReference type="ChEBI" id="CHEBI:58017"/>
    </ligand>
</feature>
<feature type="binding site" evidence="1">
    <location>
        <position position="104"/>
    </location>
    <ligand>
        <name>5-phospho-alpha-D-ribose 1-diphosphate</name>
        <dbReference type="ChEBI" id="CHEBI:58017"/>
    </ligand>
</feature>
<feature type="binding site" evidence="1">
    <location>
        <begin position="131"/>
        <end position="139"/>
    </location>
    <ligand>
        <name>5-phospho-alpha-D-ribose 1-diphosphate</name>
        <dbReference type="ChEBI" id="CHEBI:58017"/>
    </ligand>
</feature>
<feature type="binding site" evidence="1">
    <location>
        <position position="194"/>
    </location>
    <ligand>
        <name>uracil</name>
        <dbReference type="ChEBI" id="CHEBI:17568"/>
    </ligand>
</feature>
<feature type="binding site" evidence="1">
    <location>
        <begin position="199"/>
        <end position="201"/>
    </location>
    <ligand>
        <name>uracil</name>
        <dbReference type="ChEBI" id="CHEBI:17568"/>
    </ligand>
</feature>
<feature type="binding site" evidence="1">
    <location>
        <position position="200"/>
    </location>
    <ligand>
        <name>5-phospho-alpha-D-ribose 1-diphosphate</name>
        <dbReference type="ChEBI" id="CHEBI:58017"/>
    </ligand>
</feature>
<dbReference type="EC" id="2.4.2.9" evidence="1"/>
<dbReference type="EMBL" id="CP000246">
    <property type="protein sequence ID" value="ABG84779.1"/>
    <property type="molecule type" value="Genomic_DNA"/>
</dbReference>
<dbReference type="RefSeq" id="WP_003452430.1">
    <property type="nucleotide sequence ID" value="NC_008261.1"/>
</dbReference>
<dbReference type="SMR" id="Q0TNB4"/>
<dbReference type="STRING" id="195103.CPF_2462"/>
<dbReference type="PaxDb" id="195103-CPF_2462"/>
<dbReference type="GeneID" id="93001260"/>
<dbReference type="KEGG" id="cpf:CPF_2462"/>
<dbReference type="eggNOG" id="COG0035">
    <property type="taxonomic scope" value="Bacteria"/>
</dbReference>
<dbReference type="HOGENOM" id="CLU_067096_2_2_9"/>
<dbReference type="UniPathway" id="UPA00574">
    <property type="reaction ID" value="UER00636"/>
</dbReference>
<dbReference type="Proteomes" id="UP000001823">
    <property type="component" value="Chromosome"/>
</dbReference>
<dbReference type="GO" id="GO:0005525">
    <property type="term" value="F:GTP binding"/>
    <property type="evidence" value="ECO:0007669"/>
    <property type="project" value="UniProtKB-KW"/>
</dbReference>
<dbReference type="GO" id="GO:0000287">
    <property type="term" value="F:magnesium ion binding"/>
    <property type="evidence" value="ECO:0007669"/>
    <property type="project" value="UniProtKB-UniRule"/>
</dbReference>
<dbReference type="GO" id="GO:0004845">
    <property type="term" value="F:uracil phosphoribosyltransferase activity"/>
    <property type="evidence" value="ECO:0007669"/>
    <property type="project" value="UniProtKB-UniRule"/>
</dbReference>
<dbReference type="GO" id="GO:0044206">
    <property type="term" value="P:UMP salvage"/>
    <property type="evidence" value="ECO:0007669"/>
    <property type="project" value="UniProtKB-UniRule"/>
</dbReference>
<dbReference type="GO" id="GO:0006223">
    <property type="term" value="P:uracil salvage"/>
    <property type="evidence" value="ECO:0007669"/>
    <property type="project" value="InterPro"/>
</dbReference>
<dbReference type="CDD" id="cd06223">
    <property type="entry name" value="PRTases_typeI"/>
    <property type="match status" value="1"/>
</dbReference>
<dbReference type="FunFam" id="3.40.50.2020:FF:000003">
    <property type="entry name" value="Uracil phosphoribosyltransferase"/>
    <property type="match status" value="1"/>
</dbReference>
<dbReference type="Gene3D" id="3.40.50.2020">
    <property type="match status" value="1"/>
</dbReference>
<dbReference type="HAMAP" id="MF_01218_B">
    <property type="entry name" value="Upp_B"/>
    <property type="match status" value="1"/>
</dbReference>
<dbReference type="InterPro" id="IPR000836">
    <property type="entry name" value="PRibTrfase_dom"/>
</dbReference>
<dbReference type="InterPro" id="IPR029057">
    <property type="entry name" value="PRTase-like"/>
</dbReference>
<dbReference type="InterPro" id="IPR034332">
    <property type="entry name" value="Upp_B"/>
</dbReference>
<dbReference type="InterPro" id="IPR050054">
    <property type="entry name" value="UPRTase/APRTase"/>
</dbReference>
<dbReference type="InterPro" id="IPR005765">
    <property type="entry name" value="Ura_phspho_trans"/>
</dbReference>
<dbReference type="NCBIfam" id="NF001097">
    <property type="entry name" value="PRK00129.1"/>
    <property type="match status" value="1"/>
</dbReference>
<dbReference type="NCBIfam" id="TIGR01091">
    <property type="entry name" value="upp"/>
    <property type="match status" value="1"/>
</dbReference>
<dbReference type="PANTHER" id="PTHR32315">
    <property type="entry name" value="ADENINE PHOSPHORIBOSYLTRANSFERASE"/>
    <property type="match status" value="1"/>
</dbReference>
<dbReference type="PANTHER" id="PTHR32315:SF4">
    <property type="entry name" value="URACIL PHOSPHORIBOSYLTRANSFERASE, CHLOROPLASTIC"/>
    <property type="match status" value="1"/>
</dbReference>
<dbReference type="Pfam" id="PF14681">
    <property type="entry name" value="UPRTase"/>
    <property type="match status" value="1"/>
</dbReference>
<dbReference type="SUPFAM" id="SSF53271">
    <property type="entry name" value="PRTase-like"/>
    <property type="match status" value="1"/>
</dbReference>
<comment type="function">
    <text evidence="1">Catalyzes the conversion of uracil and 5-phospho-alpha-D-ribose 1-diphosphate (PRPP) to UMP and diphosphate.</text>
</comment>
<comment type="catalytic activity">
    <reaction evidence="1">
        <text>UMP + diphosphate = 5-phospho-alpha-D-ribose 1-diphosphate + uracil</text>
        <dbReference type="Rhea" id="RHEA:13017"/>
        <dbReference type="ChEBI" id="CHEBI:17568"/>
        <dbReference type="ChEBI" id="CHEBI:33019"/>
        <dbReference type="ChEBI" id="CHEBI:57865"/>
        <dbReference type="ChEBI" id="CHEBI:58017"/>
        <dbReference type="EC" id="2.4.2.9"/>
    </reaction>
</comment>
<comment type="cofactor">
    <cofactor evidence="1">
        <name>Mg(2+)</name>
        <dbReference type="ChEBI" id="CHEBI:18420"/>
    </cofactor>
    <text evidence="1">Binds 1 Mg(2+) ion per subunit. The magnesium is bound as Mg-PRPP.</text>
</comment>
<comment type="activity regulation">
    <text evidence="1">Allosterically activated by GTP.</text>
</comment>
<comment type="pathway">
    <text evidence="1">Pyrimidine metabolism; UMP biosynthesis via salvage pathway; UMP from uracil: step 1/1.</text>
</comment>
<comment type="similarity">
    <text evidence="1">Belongs to the UPRTase family.</text>
</comment>
<reference key="1">
    <citation type="journal article" date="2006" name="Genome Res.">
        <title>Skewed genomic variability in strains of the toxigenic bacterial pathogen, Clostridium perfringens.</title>
        <authorList>
            <person name="Myers G.S.A."/>
            <person name="Rasko D.A."/>
            <person name="Cheung J.K."/>
            <person name="Ravel J."/>
            <person name="Seshadri R."/>
            <person name="DeBoy R.T."/>
            <person name="Ren Q."/>
            <person name="Varga J."/>
            <person name="Awad M.M."/>
            <person name="Brinkac L.M."/>
            <person name="Daugherty S.C."/>
            <person name="Haft D.H."/>
            <person name="Dodson R.J."/>
            <person name="Madupu R."/>
            <person name="Nelson W.C."/>
            <person name="Rosovitz M.J."/>
            <person name="Sullivan S.A."/>
            <person name="Khouri H."/>
            <person name="Dimitrov G.I."/>
            <person name="Watkins K.L."/>
            <person name="Mulligan S."/>
            <person name="Benton J."/>
            <person name="Radune D."/>
            <person name="Fisher D.J."/>
            <person name="Atkins H.S."/>
            <person name="Hiscox T."/>
            <person name="Jost B.H."/>
            <person name="Billington S.J."/>
            <person name="Songer J.G."/>
            <person name="McClane B.A."/>
            <person name="Titball R.W."/>
            <person name="Rood J.I."/>
            <person name="Melville S.B."/>
            <person name="Paulsen I.T."/>
        </authorList>
    </citation>
    <scope>NUCLEOTIDE SEQUENCE [LARGE SCALE GENOMIC DNA]</scope>
    <source>
        <strain>ATCC 13124 / DSM 756 / JCM 1290 / NCIMB 6125 / NCTC 8237 / S 107 / Type A</strain>
    </source>
</reference>